<proteinExistence type="inferred from homology"/>
<protein>
    <recommendedName>
        <fullName evidence="1">Small ribosomal subunit protein uS2</fullName>
    </recommendedName>
    <alternativeName>
        <fullName evidence="2">30S ribosomal protein S2</fullName>
    </alternativeName>
</protein>
<comment type="similarity">
    <text evidence="1">Belongs to the universal ribosomal protein uS2 family.</text>
</comment>
<evidence type="ECO:0000255" key="1">
    <source>
        <dbReference type="HAMAP-Rule" id="MF_00291"/>
    </source>
</evidence>
<evidence type="ECO:0000305" key="2"/>
<sequence>MADVSMRQMLEAGVHFGHQTRFWDPKMRPYIFGERNKIHIINLEKTLPLYKDALNFAGRLASNGGKILFVGTKRPARELVREHAARCGMPYVDHRWLGGMMTNFRTVKHSIARLKDLETQAEDGTFDKVTKREALALSREREKLDRSLSGIKNMERLPDAMFVVDVGYEHIAISEAKKLGIPVIGVVDTNCSPREVDYVIPGNDDAIRAIELYVSGIADAVIEAKQASSHAAAAGKDDFVEINDTAS</sequence>
<name>RS2_HALHL</name>
<keyword id="KW-1185">Reference proteome</keyword>
<keyword id="KW-0687">Ribonucleoprotein</keyword>
<keyword id="KW-0689">Ribosomal protein</keyword>
<accession>A1WX21</accession>
<organism>
    <name type="scientific">Halorhodospira halophila (strain DSM 244 / SL1)</name>
    <name type="common">Ectothiorhodospira halophila (strain DSM 244 / SL1)</name>
    <dbReference type="NCBI Taxonomy" id="349124"/>
    <lineage>
        <taxon>Bacteria</taxon>
        <taxon>Pseudomonadati</taxon>
        <taxon>Pseudomonadota</taxon>
        <taxon>Gammaproteobacteria</taxon>
        <taxon>Chromatiales</taxon>
        <taxon>Ectothiorhodospiraceae</taxon>
        <taxon>Halorhodospira</taxon>
    </lineage>
</organism>
<feature type="chain" id="PRO_1000003975" description="Small ribosomal subunit protein uS2">
    <location>
        <begin position="1"/>
        <end position="247"/>
    </location>
</feature>
<reference key="1">
    <citation type="submission" date="2006-12" db="EMBL/GenBank/DDBJ databases">
        <title>Complete sequence of Halorhodospira halophila SL1.</title>
        <authorList>
            <consortium name="US DOE Joint Genome Institute"/>
            <person name="Copeland A."/>
            <person name="Lucas S."/>
            <person name="Lapidus A."/>
            <person name="Barry K."/>
            <person name="Detter J.C."/>
            <person name="Glavina del Rio T."/>
            <person name="Hammon N."/>
            <person name="Israni S."/>
            <person name="Dalin E."/>
            <person name="Tice H."/>
            <person name="Pitluck S."/>
            <person name="Saunders E."/>
            <person name="Brettin T."/>
            <person name="Bruce D."/>
            <person name="Han C."/>
            <person name="Tapia R."/>
            <person name="Schmutz J."/>
            <person name="Larimer F."/>
            <person name="Land M."/>
            <person name="Hauser L."/>
            <person name="Kyrpides N."/>
            <person name="Mikhailova N."/>
            <person name="Hoff W."/>
            <person name="Richardson P."/>
        </authorList>
    </citation>
    <scope>NUCLEOTIDE SEQUENCE [LARGE SCALE GENOMIC DNA]</scope>
    <source>
        <strain>DSM 244 / SL1</strain>
    </source>
</reference>
<gene>
    <name evidence="1" type="primary">rpsB</name>
    <name type="ordered locus">Hhal_1466</name>
</gene>
<dbReference type="EMBL" id="CP000544">
    <property type="protein sequence ID" value="ABM62233.1"/>
    <property type="molecule type" value="Genomic_DNA"/>
</dbReference>
<dbReference type="RefSeq" id="WP_011814255.1">
    <property type="nucleotide sequence ID" value="NC_008789.1"/>
</dbReference>
<dbReference type="SMR" id="A1WX21"/>
<dbReference type="STRING" id="349124.Hhal_1466"/>
<dbReference type="KEGG" id="hha:Hhal_1466"/>
<dbReference type="eggNOG" id="COG0052">
    <property type="taxonomic scope" value="Bacteria"/>
</dbReference>
<dbReference type="HOGENOM" id="CLU_040318_1_2_6"/>
<dbReference type="OrthoDB" id="9808036at2"/>
<dbReference type="Proteomes" id="UP000000647">
    <property type="component" value="Chromosome"/>
</dbReference>
<dbReference type="GO" id="GO:0022627">
    <property type="term" value="C:cytosolic small ribosomal subunit"/>
    <property type="evidence" value="ECO:0007669"/>
    <property type="project" value="TreeGrafter"/>
</dbReference>
<dbReference type="GO" id="GO:0003735">
    <property type="term" value="F:structural constituent of ribosome"/>
    <property type="evidence" value="ECO:0007669"/>
    <property type="project" value="InterPro"/>
</dbReference>
<dbReference type="GO" id="GO:0006412">
    <property type="term" value="P:translation"/>
    <property type="evidence" value="ECO:0007669"/>
    <property type="project" value="UniProtKB-UniRule"/>
</dbReference>
<dbReference type="CDD" id="cd01425">
    <property type="entry name" value="RPS2"/>
    <property type="match status" value="1"/>
</dbReference>
<dbReference type="FunFam" id="1.10.287.610:FF:000001">
    <property type="entry name" value="30S ribosomal protein S2"/>
    <property type="match status" value="1"/>
</dbReference>
<dbReference type="Gene3D" id="3.40.50.10490">
    <property type="entry name" value="Glucose-6-phosphate isomerase like protein, domain 1"/>
    <property type="match status" value="1"/>
</dbReference>
<dbReference type="Gene3D" id="1.10.287.610">
    <property type="entry name" value="Helix hairpin bin"/>
    <property type="match status" value="1"/>
</dbReference>
<dbReference type="HAMAP" id="MF_00291_B">
    <property type="entry name" value="Ribosomal_uS2_B"/>
    <property type="match status" value="1"/>
</dbReference>
<dbReference type="InterPro" id="IPR001865">
    <property type="entry name" value="Ribosomal_uS2"/>
</dbReference>
<dbReference type="InterPro" id="IPR005706">
    <property type="entry name" value="Ribosomal_uS2_bac/mit/plastid"/>
</dbReference>
<dbReference type="InterPro" id="IPR018130">
    <property type="entry name" value="Ribosomal_uS2_CS"/>
</dbReference>
<dbReference type="InterPro" id="IPR023591">
    <property type="entry name" value="Ribosomal_uS2_flav_dom_sf"/>
</dbReference>
<dbReference type="NCBIfam" id="TIGR01011">
    <property type="entry name" value="rpsB_bact"/>
    <property type="match status" value="1"/>
</dbReference>
<dbReference type="PANTHER" id="PTHR12534">
    <property type="entry name" value="30S RIBOSOMAL PROTEIN S2 PROKARYOTIC AND ORGANELLAR"/>
    <property type="match status" value="1"/>
</dbReference>
<dbReference type="PANTHER" id="PTHR12534:SF0">
    <property type="entry name" value="SMALL RIBOSOMAL SUBUNIT PROTEIN US2M"/>
    <property type="match status" value="1"/>
</dbReference>
<dbReference type="Pfam" id="PF00318">
    <property type="entry name" value="Ribosomal_S2"/>
    <property type="match status" value="1"/>
</dbReference>
<dbReference type="PRINTS" id="PR00395">
    <property type="entry name" value="RIBOSOMALS2"/>
</dbReference>
<dbReference type="SUPFAM" id="SSF52313">
    <property type="entry name" value="Ribosomal protein S2"/>
    <property type="match status" value="1"/>
</dbReference>
<dbReference type="PROSITE" id="PS00962">
    <property type="entry name" value="RIBOSOMAL_S2_1"/>
    <property type="match status" value="1"/>
</dbReference>
<dbReference type="PROSITE" id="PS00963">
    <property type="entry name" value="RIBOSOMAL_S2_2"/>
    <property type="match status" value="1"/>
</dbReference>